<name>MDLA_PENCA</name>
<evidence type="ECO:0000269" key="1">
    <source>
    </source>
</evidence>
<evidence type="ECO:0000269" key="2">
    <source>
    </source>
</evidence>
<evidence type="ECO:0000269" key="3">
    <source ref="3"/>
</evidence>
<evidence type="ECO:0000303" key="4">
    <source ref="3"/>
</evidence>
<evidence type="ECO:0000305" key="5"/>
<evidence type="ECO:0000305" key="6">
    <source>
    </source>
</evidence>
<feature type="signal peptide" evidence="1 2">
    <location>
        <begin position="1"/>
        <end position="26"/>
    </location>
</feature>
<feature type="chain" id="PRO_0000017760" description="Secreted mono- and diacylglycerol lipase A">
    <location>
        <begin position="27"/>
        <end position="302"/>
    </location>
</feature>
<feature type="propeptide" id="PRO_0000017761" description="Removed in mature form">
    <location>
        <begin position="303"/>
        <end position="305"/>
    </location>
</feature>
<feature type="active site" description="Nucleophile" evidence="6">
    <location>
        <position position="171"/>
    </location>
</feature>
<feature type="active site" description="Charge relay system" evidence="6">
    <location>
        <position position="225"/>
    </location>
</feature>
<feature type="active site" description="Charge relay system" evidence="6">
    <location>
        <position position="285"/>
    </location>
</feature>
<feature type="glycosylation site" description="N-linked (GlcNAc...) asparagine">
    <location>
        <position position="251"/>
    </location>
</feature>
<feature type="disulfide bond" evidence="2">
    <location>
        <begin position="62"/>
        <end position="67"/>
    </location>
</feature>
<feature type="disulfide bond" evidence="2">
    <location>
        <begin position="129"/>
        <end position="132"/>
    </location>
</feature>
<feature type="sequence conflict" description="In Ref. 2; AA sequence." evidence="5" ref="2">
    <original>T</original>
    <variation>V</variation>
    <location>
        <position position="89"/>
    </location>
</feature>
<gene>
    <name evidence="4" type="primary">mdlA</name>
</gene>
<accession>P61870</accession>
<accession>P25234</accession>
<sequence>MRLSFFTALSAVASLGYALPGKLQSRDVSTSELDQFEFWVQYAAASYYEADYTAQVGDKLSCSKGNCPEVEATGATVSYDFSDSTITDTAGYIAVDHTNSAVVLAFRGSYSVRNWVADATFVHTNPGLCDGCLAELGFWSSWKLVRDDIIKELKEVVAQNPNYELVVVGHSLGAAVATLAATDLRGKGYPSAKLYAYASPRVGNAALAKYITAQGNNFRFTHTNDPVPKLPLLSMGYVHVSPEYWITSPNNATVSTSDIKVIDGDVSFDGNTGTGLPLLTDFEAHIWYFVQVDAGKGPGLPFKRV</sequence>
<comment type="function">
    <text evidence="3">Secreted lipase strictly specific to mono- and diacylglycerol, but not triacylglycerol (Ref.3). Hydrolyzes long-chain monoacylglycerols most efficiently with the highest activities observed on 1- and 3- monopalmitoyl-sn-glycerol or 1-monostearoyl-rac-glycerol (Ref.3). Prefers to attack alpha positions to beta positions of monoacylglycerol, but shows no stereospecificity on mono- and diacylglycerol (Ref.3).</text>
</comment>
<comment type="catalytic activity">
    <reaction evidence="3">
        <text>a monoacylglycerol + H2O = glycerol + a fatty acid + H(+)</text>
        <dbReference type="Rhea" id="RHEA:15245"/>
        <dbReference type="ChEBI" id="CHEBI:15377"/>
        <dbReference type="ChEBI" id="CHEBI:15378"/>
        <dbReference type="ChEBI" id="CHEBI:17408"/>
        <dbReference type="ChEBI" id="CHEBI:17754"/>
        <dbReference type="ChEBI" id="CHEBI:28868"/>
    </reaction>
</comment>
<comment type="catalytic activity">
    <reaction evidence="3">
        <text>a diacylglycerol + H2O = a monoacylglycerol + a fatty acid + H(+)</text>
        <dbReference type="Rhea" id="RHEA:32731"/>
        <dbReference type="ChEBI" id="CHEBI:15377"/>
        <dbReference type="ChEBI" id="CHEBI:15378"/>
        <dbReference type="ChEBI" id="CHEBI:17408"/>
        <dbReference type="ChEBI" id="CHEBI:18035"/>
        <dbReference type="ChEBI" id="CHEBI:28868"/>
    </reaction>
</comment>
<comment type="activity regulation">
    <text evidence="3">Both Fe(3+) and Hg(2+) inhibit the activity significantly.</text>
</comment>
<comment type="subcellular location">
    <subcellularLocation>
        <location evidence="3">Secreted</location>
    </subcellularLocation>
</comment>
<comment type="PTM">
    <text evidence="3">Multiple forms of this lipase are due to the presence of different carbohydrates, which may contribute to the stability of this lipase but not to the enzyme activity.</text>
</comment>
<comment type="similarity">
    <text evidence="5">Belongs to the AB hydrolase superfamily. Lipase family. Class 3 subfamily.</text>
</comment>
<reference key="1">
    <citation type="journal article" date="1991" name="Gene">
        <title>Cloning and structure of the mono- and diacylglycerol lipase-encoding gene from Penicillium camembertii U-150.</title>
        <authorList>
            <person name="Yamaguchi S."/>
            <person name="Mase T."/>
            <person name="Takeuchi K."/>
        </authorList>
    </citation>
    <scope>NUCLEOTIDE SEQUENCE [GENOMIC DNA]</scope>
    <scope>PROTEIN SEQUENCE OF 27-60 AND 261-296</scope>
    <source>
        <strain>U-150</strain>
    </source>
</reference>
<reference key="2">
    <citation type="journal article" date="1993" name="FEBS Lett.">
        <title>Primary structure determination of mono- and diacylglycerol lipase from Penicillium camembertii.</title>
        <authorList>
            <person name="Isobe K."/>
            <person name="Nokihara K."/>
        </authorList>
    </citation>
    <scope>PROTEIN SEQUENCE OF 27-302</scope>
    <scope>DISULFIDE BONDS</scope>
    <source>
        <strain>U-150</strain>
    </source>
</reference>
<reference key="3">
    <citation type="journal article" date="1991" name="Appl. Microbiol. Biotechnol.">
        <title>Purification and characterization of mono-and diacylglycerol lipase isolated from Penicillium camembertii U-150.</title>
        <authorList>
            <person name="Yamaguchi S."/>
            <person name="Mase T."/>
        </authorList>
    </citation>
    <scope>FUNCTION</scope>
    <scope>CATALYTIC ACTIVITY</scope>
    <scope>SUBSTRATE SPECIFICITY</scope>
    <scope>ACTIVITY REGULATION</scope>
    <scope>GLYCOSYLATION</scope>
    <scope>SUBCELLULAR LOCATION</scope>
</reference>
<reference key="4">
    <citation type="journal article" date="1994" name="Nat. Struct. Biol.">
        <title>An unusual buried polar cluster in a family of fungal lipases.</title>
        <authorList>
            <person name="Derewenda U."/>
            <person name="Swenson L."/>
            <person name="Green R."/>
            <person name="Wei Y."/>
            <person name="Dodson G.G."/>
            <person name="Yamaguchi S."/>
            <person name="Haas M.J."/>
            <person name="Derewenda Z.S."/>
        </authorList>
    </citation>
    <scope>X-RAY CRYSTALLOGRAPHY (2.0 ANGSTROMS)</scope>
    <scope>ACTIVE SITE</scope>
</reference>
<dbReference type="EC" id="3.1.1.-" evidence="3"/>
<dbReference type="EMBL" id="D90315">
    <property type="protein sequence ID" value="BAA14345.1"/>
    <property type="molecule type" value="Genomic_DNA"/>
</dbReference>
<dbReference type="PIR" id="JQ1188">
    <property type="entry name" value="JQ1188"/>
</dbReference>
<dbReference type="PDB" id="1TIA">
    <property type="method" value="X-ray"/>
    <property type="resolution" value="2.10 A"/>
    <property type="chains" value="A=27-305"/>
</dbReference>
<dbReference type="PDBsum" id="1TIA"/>
<dbReference type="SMR" id="P61870"/>
<dbReference type="ESTHER" id="penca-mdgli">
    <property type="family name" value="Lipase_3"/>
</dbReference>
<dbReference type="GlyCosmos" id="P61870">
    <property type="glycosylation" value="1 site, No reported glycans"/>
</dbReference>
<dbReference type="EvolutionaryTrace" id="P61870"/>
<dbReference type="GO" id="GO:0005576">
    <property type="term" value="C:extracellular region"/>
    <property type="evidence" value="ECO:0007669"/>
    <property type="project" value="UniProtKB-SubCell"/>
</dbReference>
<dbReference type="GO" id="GO:0120516">
    <property type="term" value="F:diacylglycerol lipase activity"/>
    <property type="evidence" value="ECO:0007669"/>
    <property type="project" value="RHEA"/>
</dbReference>
<dbReference type="GO" id="GO:0047372">
    <property type="term" value="F:monoacylglycerol lipase activity"/>
    <property type="evidence" value="ECO:0007669"/>
    <property type="project" value="RHEA"/>
</dbReference>
<dbReference type="GO" id="GO:0017000">
    <property type="term" value="P:antibiotic biosynthetic process"/>
    <property type="evidence" value="ECO:0007669"/>
    <property type="project" value="UniProtKB-ARBA"/>
</dbReference>
<dbReference type="GO" id="GO:0016042">
    <property type="term" value="P:lipid catabolic process"/>
    <property type="evidence" value="ECO:0007669"/>
    <property type="project" value="UniProtKB-KW"/>
</dbReference>
<dbReference type="GO" id="GO:0072330">
    <property type="term" value="P:monocarboxylic acid biosynthetic process"/>
    <property type="evidence" value="ECO:0007669"/>
    <property type="project" value="UniProtKB-ARBA"/>
</dbReference>
<dbReference type="CDD" id="cd00519">
    <property type="entry name" value="Lipase_3"/>
    <property type="match status" value="1"/>
</dbReference>
<dbReference type="Gene3D" id="3.40.50.1820">
    <property type="entry name" value="alpha/beta hydrolase"/>
    <property type="match status" value="1"/>
</dbReference>
<dbReference type="InterPro" id="IPR029058">
    <property type="entry name" value="AB_hydrolase_fold"/>
</dbReference>
<dbReference type="InterPro" id="IPR051299">
    <property type="entry name" value="AB_hydrolase_lip/est"/>
</dbReference>
<dbReference type="InterPro" id="IPR002921">
    <property type="entry name" value="Fungal_lipase-type"/>
</dbReference>
<dbReference type="InterPro" id="IPR005592">
    <property type="entry name" value="Mono/diacylglycerol_lipase_N"/>
</dbReference>
<dbReference type="PANTHER" id="PTHR46640:SF1">
    <property type="entry name" value="FUNGAL LIPASE-LIKE DOMAIN-CONTAINING PROTEIN-RELATED"/>
    <property type="match status" value="1"/>
</dbReference>
<dbReference type="PANTHER" id="PTHR46640">
    <property type="entry name" value="TRIACYLGLYCEROL LIPASE, PUTATIVE (AFU_ORTHOLOGUE AFUA_6G06510)-RELATED"/>
    <property type="match status" value="1"/>
</dbReference>
<dbReference type="Pfam" id="PF03893">
    <property type="entry name" value="Lipase3_N"/>
    <property type="match status" value="1"/>
</dbReference>
<dbReference type="Pfam" id="PF01764">
    <property type="entry name" value="Lipase_3"/>
    <property type="match status" value="1"/>
</dbReference>
<dbReference type="SUPFAM" id="SSF53474">
    <property type="entry name" value="alpha/beta-Hydrolases"/>
    <property type="match status" value="1"/>
</dbReference>
<dbReference type="PROSITE" id="PS00120">
    <property type="entry name" value="LIPASE_SER"/>
    <property type="match status" value="1"/>
</dbReference>
<organism>
    <name type="scientific">Penicillium camembertii</name>
    <dbReference type="NCBI Taxonomy" id="5075"/>
    <lineage>
        <taxon>Eukaryota</taxon>
        <taxon>Fungi</taxon>
        <taxon>Dikarya</taxon>
        <taxon>Ascomycota</taxon>
        <taxon>Pezizomycotina</taxon>
        <taxon>Eurotiomycetes</taxon>
        <taxon>Eurotiomycetidae</taxon>
        <taxon>Eurotiales</taxon>
        <taxon>Aspergillaceae</taxon>
        <taxon>Penicillium</taxon>
    </lineage>
</organism>
<keyword id="KW-0002">3D-structure</keyword>
<keyword id="KW-0903">Direct protein sequencing</keyword>
<keyword id="KW-1015">Disulfide bond</keyword>
<keyword id="KW-0325">Glycoprotein</keyword>
<keyword id="KW-0378">Hydrolase</keyword>
<keyword id="KW-0442">Lipid degradation</keyword>
<keyword id="KW-0443">Lipid metabolism</keyword>
<keyword id="KW-0964">Secreted</keyword>
<keyword id="KW-0732">Signal</keyword>
<keyword id="KW-0865">Zymogen</keyword>
<protein>
    <recommendedName>
        <fullName evidence="4">Secreted mono- and diacylglycerol lipase A</fullName>
        <shortName evidence="4">MDGL</shortName>
        <ecNumber evidence="3">3.1.1.-</ecNumber>
    </recommendedName>
</protein>
<proteinExistence type="evidence at protein level"/>